<keyword id="KW-1003">Cell membrane</keyword>
<keyword id="KW-0449">Lipoprotein</keyword>
<keyword id="KW-0472">Membrane</keyword>
<keyword id="KW-0564">Palmitate</keyword>
<keyword id="KW-1185">Reference proteome</keyword>
<keyword id="KW-0732">Signal</keyword>
<comment type="subcellular location">
    <subcellularLocation>
        <location evidence="1">Cell membrane</location>
        <topology evidence="1">Lipid-anchor</topology>
    </subcellularLocation>
</comment>
<comment type="similarity">
    <text evidence="2">To P.multocida PM0015.</text>
</comment>
<organism>
    <name type="scientific">Pasteurella multocida (strain Pm70)</name>
    <dbReference type="NCBI Taxonomy" id="272843"/>
    <lineage>
        <taxon>Bacteria</taxon>
        <taxon>Pseudomonadati</taxon>
        <taxon>Pseudomonadota</taxon>
        <taxon>Gammaproteobacteria</taxon>
        <taxon>Pasteurellales</taxon>
        <taxon>Pasteurellaceae</taxon>
        <taxon>Pasteurella</taxon>
    </lineage>
</organism>
<proteinExistence type="inferred from homology"/>
<name>Y1509_PASMU</name>
<sequence>MKQKYLFIASMALAGCGSMSESNKYWIQYKDIDQSVKEVSFWSREQFHSPSDVKGTVYQRDNLTHLATSTPLGEIYHIYDVNHIPMNVIFLDTKTQRSLNPQNAQDMAQLSKATQFDFYEFGKGRIAHAVFSAKTGLCQDFKSKRGVALKMATNYYTDASYKGYYVSVIHAIIRHNGQHTDFAYTPAFSIADTKALAMTQALEKQDGERVAQMNLKEKVTLLTNIVCQ</sequence>
<reference key="1">
    <citation type="journal article" date="2001" name="Proc. Natl. Acad. Sci. U.S.A.">
        <title>Complete genomic sequence of Pasteurella multocida Pm70.</title>
        <authorList>
            <person name="May B.J."/>
            <person name="Zhang Q."/>
            <person name="Li L.L."/>
            <person name="Paustian M.L."/>
            <person name="Whittam T.S."/>
            <person name="Kapur V."/>
        </authorList>
    </citation>
    <scope>NUCLEOTIDE SEQUENCE [LARGE SCALE GENOMIC DNA]</scope>
    <source>
        <strain>Pm70</strain>
    </source>
</reference>
<dbReference type="EMBL" id="AE004439">
    <property type="protein sequence ID" value="AAK03593.1"/>
    <property type="molecule type" value="Genomic_DNA"/>
</dbReference>
<dbReference type="RefSeq" id="WP_010907198.1">
    <property type="nucleotide sequence ID" value="NC_002663.1"/>
</dbReference>
<dbReference type="STRING" id="272843.PM1509"/>
<dbReference type="EnsemblBacteria" id="AAK03593">
    <property type="protein sequence ID" value="AAK03593"/>
    <property type="gene ID" value="PM1509"/>
</dbReference>
<dbReference type="KEGG" id="pmu:PM1509"/>
<dbReference type="PATRIC" id="fig|272843.6.peg.1525"/>
<dbReference type="HOGENOM" id="CLU_1213875_0_0_6"/>
<dbReference type="OrthoDB" id="5677005at2"/>
<dbReference type="Proteomes" id="UP000000809">
    <property type="component" value="Chromosome"/>
</dbReference>
<dbReference type="GO" id="GO:0005886">
    <property type="term" value="C:plasma membrane"/>
    <property type="evidence" value="ECO:0007669"/>
    <property type="project" value="UniProtKB-SubCell"/>
</dbReference>
<dbReference type="PROSITE" id="PS51257">
    <property type="entry name" value="PROKAR_LIPOPROTEIN"/>
    <property type="match status" value="1"/>
</dbReference>
<gene>
    <name type="ordered locus">PM1509</name>
</gene>
<accession>Q9CKU6</accession>
<evidence type="ECO:0000255" key="1">
    <source>
        <dbReference type="PROSITE-ProRule" id="PRU00303"/>
    </source>
</evidence>
<evidence type="ECO:0000305" key="2"/>
<feature type="signal peptide" evidence="1">
    <location>
        <begin position="1"/>
        <end position="15"/>
    </location>
</feature>
<feature type="chain" id="PRO_0000014183" description="Uncharacterized lipoprotein PM1509">
    <location>
        <begin position="16"/>
        <end position="228"/>
    </location>
</feature>
<feature type="lipid moiety-binding region" description="N-palmitoyl cysteine" evidence="1">
    <location>
        <position position="16"/>
    </location>
</feature>
<feature type="lipid moiety-binding region" description="S-diacylglycerol cysteine" evidence="1">
    <location>
        <position position="16"/>
    </location>
</feature>
<protein>
    <recommendedName>
        <fullName>Uncharacterized lipoprotein PM1509</fullName>
    </recommendedName>
</protein>